<dbReference type="GO" id="GO:0005576">
    <property type="term" value="C:extracellular region"/>
    <property type="evidence" value="ECO:0007669"/>
    <property type="project" value="UniProtKB-SubCell"/>
</dbReference>
<dbReference type="GO" id="GO:0042742">
    <property type="term" value="P:defense response to bacterium"/>
    <property type="evidence" value="ECO:0007669"/>
    <property type="project" value="UniProtKB-KW"/>
</dbReference>
<dbReference type="GO" id="GO:0031640">
    <property type="term" value="P:killing of cells of another organism"/>
    <property type="evidence" value="ECO:0007669"/>
    <property type="project" value="UniProtKB-KW"/>
</dbReference>
<proteinExistence type="evidence at protein level"/>
<reference evidence="4" key="1">
    <citation type="submission" date="2006-08" db="UniProtKB">
        <title>Dermaseptins and phylloseptins from Phyllomedusa tarsius (Amphibia).</title>
        <authorList>
            <person name="Prates M.V."/>
            <person name="Jardim D.P."/>
            <person name="Silva L.P."/>
            <person name="Gordo M."/>
            <person name="Leite J.R.S.A."/>
            <person name="Figueredo R.C.R."/>
            <person name="Amaral A.C."/>
            <person name="Felipe M.S.S."/>
            <person name="Bloch C. Jr."/>
        </authorList>
    </citation>
    <scope>PROTEIN SEQUENCE</scope>
    <scope>FUNCTION</scope>
    <scope>SUBCELLULAR LOCATION</scope>
    <scope>TISSUE SPECIFICITY</scope>
    <scope>MASS SPECTROMETRY</scope>
    <scope>AMIDATION AT GLN-23</scope>
    <source>
        <tissue evidence="2">Skin secretion</tissue>
    </source>
</reference>
<protein>
    <recommendedName>
        <fullName evidence="3">Dermaseptin-4</fullName>
        <shortName evidence="3">DStar 04</shortName>
    </recommendedName>
</protein>
<feature type="peptide" id="PRO_0000376036" description="Dermaseptin-4" evidence="2">
    <location>
        <begin position="1"/>
        <end position="23"/>
    </location>
</feature>
<feature type="modified residue" description="Glutamine amide" evidence="2">
    <location>
        <position position="23"/>
    </location>
</feature>
<comment type="function">
    <text evidence="2">Antimicrobial peptide, active against the Gram-positive bacterium S.aureus, and the Gram-negative bacteria E.coli and P.aeruginosa. Has hemolytic activity (5% hemolysis at 128 ug/ml).</text>
</comment>
<comment type="subcellular location">
    <subcellularLocation>
        <location evidence="2">Secreted</location>
    </subcellularLocation>
</comment>
<comment type="tissue specificity">
    <text evidence="2">Expressed by the skin glands.</text>
</comment>
<comment type="mass spectrometry"/>
<comment type="similarity">
    <text evidence="1">Belongs to the frog skin active peptide (FSAP) family. Dermaseptin subfamily.</text>
</comment>
<evidence type="ECO:0000255" key="1"/>
<evidence type="ECO:0000269" key="2">
    <source ref="1"/>
</evidence>
<evidence type="ECO:0000303" key="3">
    <source ref="1"/>
</evidence>
<evidence type="ECO:0000305" key="4"/>
<keyword id="KW-0027">Amidation</keyword>
<keyword id="KW-0878">Amphibian defense peptide</keyword>
<keyword id="KW-0044">Antibiotic</keyword>
<keyword id="KW-0929">Antimicrobial</keyword>
<keyword id="KW-0204">Cytolysis</keyword>
<keyword id="KW-0903">Direct protein sequencing</keyword>
<keyword id="KW-0354">Hemolysis</keyword>
<keyword id="KW-0964">Secreted</keyword>
<name>DMS4_PHYTS</name>
<sequence>ALWKDILKNAGKAALNEINQIVQ</sequence>
<organism>
    <name type="scientific">Phyllomedusa tarsius</name>
    <name type="common">Brownbelly leaf frog</name>
    <name type="synonym">Phyllomedusa tarsia</name>
    <dbReference type="NCBI Taxonomy" id="306084"/>
    <lineage>
        <taxon>Eukaryota</taxon>
        <taxon>Metazoa</taxon>
        <taxon>Chordata</taxon>
        <taxon>Craniata</taxon>
        <taxon>Vertebrata</taxon>
        <taxon>Euteleostomi</taxon>
        <taxon>Amphibia</taxon>
        <taxon>Batrachia</taxon>
        <taxon>Anura</taxon>
        <taxon>Neobatrachia</taxon>
        <taxon>Hyloidea</taxon>
        <taxon>Hylidae</taxon>
        <taxon>Phyllomedusinae</taxon>
        <taxon>Phyllomedusa</taxon>
    </lineage>
</organism>
<accession>P84924</accession>